<protein>
    <recommendedName>
        <fullName evidence="1">Transcription elongation factor GreA</fullName>
    </recommendedName>
    <alternativeName>
        <fullName evidence="1">Transcript cleavage factor GreA</fullName>
    </alternativeName>
</protein>
<dbReference type="EMBL" id="CP000747">
    <property type="protein sequence ID" value="ACG79002.1"/>
    <property type="molecule type" value="Genomic_DNA"/>
</dbReference>
<dbReference type="RefSeq" id="WP_012523140.1">
    <property type="nucleotide sequence ID" value="NC_011144.1"/>
</dbReference>
<dbReference type="SMR" id="B4RH54"/>
<dbReference type="STRING" id="450851.PHZ_c2593"/>
<dbReference type="KEGG" id="pzu:PHZ_c2593"/>
<dbReference type="eggNOG" id="COG0782">
    <property type="taxonomic scope" value="Bacteria"/>
</dbReference>
<dbReference type="HOGENOM" id="CLU_101379_2_0_5"/>
<dbReference type="OrthoDB" id="9808774at2"/>
<dbReference type="Proteomes" id="UP000001868">
    <property type="component" value="Chromosome"/>
</dbReference>
<dbReference type="GO" id="GO:0003677">
    <property type="term" value="F:DNA binding"/>
    <property type="evidence" value="ECO:0007669"/>
    <property type="project" value="UniProtKB-UniRule"/>
</dbReference>
<dbReference type="GO" id="GO:0070063">
    <property type="term" value="F:RNA polymerase binding"/>
    <property type="evidence" value="ECO:0007669"/>
    <property type="project" value="InterPro"/>
</dbReference>
<dbReference type="GO" id="GO:0006354">
    <property type="term" value="P:DNA-templated transcription elongation"/>
    <property type="evidence" value="ECO:0007669"/>
    <property type="project" value="TreeGrafter"/>
</dbReference>
<dbReference type="GO" id="GO:0032784">
    <property type="term" value="P:regulation of DNA-templated transcription elongation"/>
    <property type="evidence" value="ECO:0007669"/>
    <property type="project" value="UniProtKB-UniRule"/>
</dbReference>
<dbReference type="FunFam" id="1.10.287.180:FF:000001">
    <property type="entry name" value="Transcription elongation factor GreA"/>
    <property type="match status" value="1"/>
</dbReference>
<dbReference type="FunFam" id="3.10.50.30:FF:000001">
    <property type="entry name" value="Transcription elongation factor GreA"/>
    <property type="match status" value="1"/>
</dbReference>
<dbReference type="Gene3D" id="3.10.50.30">
    <property type="entry name" value="Transcription elongation factor, GreA/GreB, C-terminal domain"/>
    <property type="match status" value="1"/>
</dbReference>
<dbReference type="Gene3D" id="1.10.287.180">
    <property type="entry name" value="Transcription elongation factor, GreA/GreB, N-terminal domain"/>
    <property type="match status" value="1"/>
</dbReference>
<dbReference type="HAMAP" id="MF_00105">
    <property type="entry name" value="GreA_GreB"/>
    <property type="match status" value="1"/>
</dbReference>
<dbReference type="InterPro" id="IPR036953">
    <property type="entry name" value="GreA/GreB_C_sf"/>
</dbReference>
<dbReference type="InterPro" id="IPR018151">
    <property type="entry name" value="TF_GreA/GreB_CS"/>
</dbReference>
<dbReference type="InterPro" id="IPR006359">
    <property type="entry name" value="Tscrpt_elong_fac_GreA"/>
</dbReference>
<dbReference type="InterPro" id="IPR028624">
    <property type="entry name" value="Tscrpt_elong_fac_GreA/B"/>
</dbReference>
<dbReference type="InterPro" id="IPR001437">
    <property type="entry name" value="Tscrpt_elong_fac_GreA/B_C"/>
</dbReference>
<dbReference type="InterPro" id="IPR023459">
    <property type="entry name" value="Tscrpt_elong_fac_GreA/B_fam"/>
</dbReference>
<dbReference type="InterPro" id="IPR022691">
    <property type="entry name" value="Tscrpt_elong_fac_GreA/B_N"/>
</dbReference>
<dbReference type="InterPro" id="IPR036805">
    <property type="entry name" value="Tscrpt_elong_fac_GreA/B_N_sf"/>
</dbReference>
<dbReference type="NCBIfam" id="TIGR01462">
    <property type="entry name" value="greA"/>
    <property type="match status" value="1"/>
</dbReference>
<dbReference type="NCBIfam" id="NF001261">
    <property type="entry name" value="PRK00226.1-2"/>
    <property type="match status" value="1"/>
</dbReference>
<dbReference type="NCBIfam" id="NF001263">
    <property type="entry name" value="PRK00226.1-4"/>
    <property type="match status" value="1"/>
</dbReference>
<dbReference type="NCBIfam" id="NF001264">
    <property type="entry name" value="PRK00226.1-5"/>
    <property type="match status" value="1"/>
</dbReference>
<dbReference type="PANTHER" id="PTHR30437">
    <property type="entry name" value="TRANSCRIPTION ELONGATION FACTOR GREA"/>
    <property type="match status" value="1"/>
</dbReference>
<dbReference type="PANTHER" id="PTHR30437:SF4">
    <property type="entry name" value="TRANSCRIPTION ELONGATION FACTOR GREA"/>
    <property type="match status" value="1"/>
</dbReference>
<dbReference type="Pfam" id="PF01272">
    <property type="entry name" value="GreA_GreB"/>
    <property type="match status" value="1"/>
</dbReference>
<dbReference type="Pfam" id="PF03449">
    <property type="entry name" value="GreA_GreB_N"/>
    <property type="match status" value="1"/>
</dbReference>
<dbReference type="PIRSF" id="PIRSF006092">
    <property type="entry name" value="GreA_GreB"/>
    <property type="match status" value="1"/>
</dbReference>
<dbReference type="SUPFAM" id="SSF54534">
    <property type="entry name" value="FKBP-like"/>
    <property type="match status" value="1"/>
</dbReference>
<dbReference type="SUPFAM" id="SSF46557">
    <property type="entry name" value="GreA transcript cleavage protein, N-terminal domain"/>
    <property type="match status" value="1"/>
</dbReference>
<dbReference type="PROSITE" id="PS00829">
    <property type="entry name" value="GREAB_1"/>
    <property type="match status" value="1"/>
</dbReference>
<dbReference type="PROSITE" id="PS00830">
    <property type="entry name" value="GREAB_2"/>
    <property type="match status" value="1"/>
</dbReference>
<feature type="chain" id="PRO_1000094186" description="Transcription elongation factor GreA">
    <location>
        <begin position="1"/>
        <end position="157"/>
    </location>
</feature>
<organism>
    <name type="scientific">Phenylobacterium zucineum (strain HLK1)</name>
    <dbReference type="NCBI Taxonomy" id="450851"/>
    <lineage>
        <taxon>Bacteria</taxon>
        <taxon>Pseudomonadati</taxon>
        <taxon>Pseudomonadota</taxon>
        <taxon>Alphaproteobacteria</taxon>
        <taxon>Caulobacterales</taxon>
        <taxon>Caulobacteraceae</taxon>
        <taxon>Phenylobacterium</taxon>
    </lineage>
</organism>
<keyword id="KW-0238">DNA-binding</keyword>
<keyword id="KW-1185">Reference proteome</keyword>
<keyword id="KW-0804">Transcription</keyword>
<keyword id="KW-0805">Transcription regulation</keyword>
<accession>B4RH54</accession>
<proteinExistence type="inferred from homology"/>
<evidence type="ECO:0000255" key="1">
    <source>
        <dbReference type="HAMAP-Rule" id="MF_00105"/>
    </source>
</evidence>
<comment type="function">
    <text evidence="1">Necessary for efficient RNA polymerase transcription elongation past template-encoded arresting sites. The arresting sites in DNA have the property of trapping a certain fraction of elongating RNA polymerases that pass through, resulting in locked ternary complexes. Cleavage of the nascent transcript by cleavage factors such as GreA or GreB allows the resumption of elongation from the new 3'terminus. GreA releases sequences of 2 to 3 nucleotides.</text>
</comment>
<comment type="similarity">
    <text evidence="1">Belongs to the GreA/GreB family.</text>
</comment>
<reference key="1">
    <citation type="journal article" date="2008" name="BMC Genomics">
        <title>Complete genome of Phenylobacterium zucineum - a novel facultative intracellular bacterium isolated from human erythroleukemia cell line K562.</title>
        <authorList>
            <person name="Luo Y."/>
            <person name="Xu X."/>
            <person name="Ding Z."/>
            <person name="Liu Z."/>
            <person name="Zhang B."/>
            <person name="Yan Z."/>
            <person name="Sun J."/>
            <person name="Hu S."/>
            <person name="Hu X."/>
        </authorList>
    </citation>
    <scope>NUCLEOTIDE SEQUENCE [LARGE SCALE GENOMIC DNA]</scope>
    <source>
        <strain>HLK1</strain>
    </source>
</reference>
<name>GREA_PHEZH</name>
<gene>
    <name evidence="1" type="primary">greA</name>
    <name type="ordered locus">PHZ_c2593</name>
</gene>
<sequence length="157" mass="17177">MEKVPMTAEGYKALDEELKRLKTVERPAVIAAIAEARSHGDLSENAEYHAAKERQGWIEGQIAEIEDKMARAQVIDVSKLSGEQVKFGATVSLIDEDTEEEARYQIVGEHEADVKAGRVSVTSPIARAIIGKETGDVVEVNTPGGVKAYEITKVEWV</sequence>